<dbReference type="EMBL" id="AP008934">
    <property type="protein sequence ID" value="BAE18974.1"/>
    <property type="molecule type" value="Genomic_DNA"/>
</dbReference>
<dbReference type="RefSeq" id="WP_011303519.1">
    <property type="nucleotide sequence ID" value="NZ_MTGA01000039.1"/>
</dbReference>
<dbReference type="SMR" id="Q49W85"/>
<dbReference type="GeneID" id="3615490"/>
<dbReference type="KEGG" id="ssp:SSP1829"/>
<dbReference type="PATRIC" id="fig|342451.11.peg.1825"/>
<dbReference type="eggNOG" id="COG1320">
    <property type="taxonomic scope" value="Bacteria"/>
</dbReference>
<dbReference type="HOGENOM" id="CLU_121334_0_3_9"/>
<dbReference type="OrthoDB" id="9806575at2"/>
<dbReference type="Proteomes" id="UP000006371">
    <property type="component" value="Chromosome"/>
</dbReference>
<dbReference type="GO" id="GO:0005886">
    <property type="term" value="C:plasma membrane"/>
    <property type="evidence" value="ECO:0007669"/>
    <property type="project" value="UniProtKB-SubCell"/>
</dbReference>
<dbReference type="GO" id="GO:0015385">
    <property type="term" value="F:sodium:proton antiporter activity"/>
    <property type="evidence" value="ECO:0007669"/>
    <property type="project" value="TreeGrafter"/>
</dbReference>
<dbReference type="InterPro" id="IPR005133">
    <property type="entry name" value="PhaG_MnhG_YufB"/>
</dbReference>
<dbReference type="NCBIfam" id="TIGR01300">
    <property type="entry name" value="CPA3_mnhG_phaG"/>
    <property type="match status" value="1"/>
</dbReference>
<dbReference type="NCBIfam" id="NF009237">
    <property type="entry name" value="PRK12587.1"/>
    <property type="match status" value="1"/>
</dbReference>
<dbReference type="NCBIfam" id="NF009314">
    <property type="entry name" value="PRK12674.1-2"/>
    <property type="match status" value="1"/>
</dbReference>
<dbReference type="PANTHER" id="PTHR34703">
    <property type="entry name" value="ANTIPORTER SUBUNIT MNHG2-RELATED"/>
    <property type="match status" value="1"/>
</dbReference>
<dbReference type="PANTHER" id="PTHR34703:SF1">
    <property type="entry name" value="ANTIPORTER SUBUNIT MNHG2-RELATED"/>
    <property type="match status" value="1"/>
</dbReference>
<dbReference type="Pfam" id="PF03334">
    <property type="entry name" value="PhaG_MnhG_YufB"/>
    <property type="match status" value="1"/>
</dbReference>
<sequence length="118" mass="12656">MITTIVISIALILVIIGSLISALAAIGILRLDDVYARAHAAGKAATLGAMLLISGVFLFFIGREGYVNMQLIVGILFILITGPLASHLIIKSAYNLNTPASKRTKHDEIKKDLKNTKL</sequence>
<protein>
    <recommendedName>
        <fullName>Na(+)/H(+) antiporter subunit G1</fullName>
    </recommendedName>
    <alternativeName>
        <fullName>Mnh complex subunit G1</fullName>
    </alternativeName>
</protein>
<accession>Q49W85</accession>
<gene>
    <name type="primary">mnhG1</name>
    <name type="ordered locus">SSP1829</name>
</gene>
<name>MNHG1_STAS1</name>
<reference key="1">
    <citation type="journal article" date="2005" name="Proc. Natl. Acad. Sci. U.S.A.">
        <title>Whole genome sequence of Staphylococcus saprophyticus reveals the pathogenesis of uncomplicated urinary tract infection.</title>
        <authorList>
            <person name="Kuroda M."/>
            <person name="Yamashita A."/>
            <person name="Hirakawa H."/>
            <person name="Kumano M."/>
            <person name="Morikawa K."/>
            <person name="Higashide M."/>
            <person name="Maruyama A."/>
            <person name="Inose Y."/>
            <person name="Matoba K."/>
            <person name="Toh H."/>
            <person name="Kuhara S."/>
            <person name="Hattori M."/>
            <person name="Ohta T."/>
        </authorList>
    </citation>
    <scope>NUCLEOTIDE SEQUENCE [LARGE SCALE GENOMIC DNA]</scope>
    <source>
        <strain>ATCC 15305 / DSM 20229 / NCIMB 8711 / NCTC 7292 / S-41</strain>
    </source>
</reference>
<comment type="function">
    <text evidence="1">Mnh complex is a Na(+)/H(+) antiporter involved in Na(+) excretion.</text>
</comment>
<comment type="subunit">
    <text evidence="1">May form a heterooligomeric complex that consists of seven subunits: mnhA1, mnhB1, mnhC1, mnhD1, mnhE1, mnhF1 and mnhG1.</text>
</comment>
<comment type="subcellular location">
    <subcellularLocation>
        <location evidence="3">Cell membrane</location>
        <topology evidence="3">Multi-pass membrane protein</topology>
    </subcellularLocation>
</comment>
<comment type="similarity">
    <text evidence="3">Belongs to the CPA3 antiporters (TC 2.A.63) subunit G family.</text>
</comment>
<evidence type="ECO:0000250" key="1"/>
<evidence type="ECO:0000255" key="2"/>
<evidence type="ECO:0000305" key="3"/>
<keyword id="KW-0050">Antiport</keyword>
<keyword id="KW-1003">Cell membrane</keyword>
<keyword id="KW-0375">Hydrogen ion transport</keyword>
<keyword id="KW-0406">Ion transport</keyword>
<keyword id="KW-0472">Membrane</keyword>
<keyword id="KW-1185">Reference proteome</keyword>
<keyword id="KW-0915">Sodium</keyword>
<keyword id="KW-0739">Sodium transport</keyword>
<keyword id="KW-0812">Transmembrane</keyword>
<keyword id="KW-1133">Transmembrane helix</keyword>
<keyword id="KW-0813">Transport</keyword>
<organism>
    <name type="scientific">Staphylococcus saprophyticus subsp. saprophyticus (strain ATCC 15305 / DSM 20229 / NCIMB 8711 / NCTC 7292 / S-41)</name>
    <dbReference type="NCBI Taxonomy" id="342451"/>
    <lineage>
        <taxon>Bacteria</taxon>
        <taxon>Bacillati</taxon>
        <taxon>Bacillota</taxon>
        <taxon>Bacilli</taxon>
        <taxon>Bacillales</taxon>
        <taxon>Staphylococcaceae</taxon>
        <taxon>Staphylococcus</taxon>
    </lineage>
</organism>
<proteinExistence type="inferred from homology"/>
<feature type="chain" id="PRO_0000372172" description="Na(+)/H(+) antiporter subunit G1">
    <location>
        <begin position="1"/>
        <end position="118"/>
    </location>
</feature>
<feature type="transmembrane region" description="Helical" evidence="2">
    <location>
        <begin position="9"/>
        <end position="29"/>
    </location>
</feature>
<feature type="transmembrane region" description="Helical" evidence="2">
    <location>
        <begin position="41"/>
        <end position="61"/>
    </location>
</feature>
<feature type="transmembrane region" description="Helical" evidence="2">
    <location>
        <begin position="70"/>
        <end position="90"/>
    </location>
</feature>